<sequence>MDKKELFDALDDFSQQLLVTLADVEAIKKNLKSLVEENTALRLENSKLRERLGEVEADAPVKAKHVRESVRRIYRDGFHVCNDFYGQRREQDEECMFCDELLYRE</sequence>
<protein>
    <recommendedName>
        <fullName evidence="1">Replication initiation control protein YabA</fullName>
    </recommendedName>
</protein>
<keyword id="KW-0963">Cytoplasm</keyword>
<keyword id="KW-0235">DNA replication</keyword>
<keyword id="KW-0236">DNA replication inhibitor</keyword>
<keyword id="KW-0479">Metal-binding</keyword>
<keyword id="KW-0862">Zinc</keyword>
<dbReference type="EMBL" id="FM211187">
    <property type="protein sequence ID" value="CAR68690.1"/>
    <property type="molecule type" value="Genomic_DNA"/>
</dbReference>
<dbReference type="RefSeq" id="WP_000358228.1">
    <property type="nucleotide sequence ID" value="NC_011900.1"/>
</dbReference>
<dbReference type="SMR" id="B8ZP39"/>
<dbReference type="GeneID" id="93739792"/>
<dbReference type="KEGG" id="sne:SPN23F08590"/>
<dbReference type="HOGENOM" id="CLU_157169_0_0_9"/>
<dbReference type="GO" id="GO:0009295">
    <property type="term" value="C:nucleoid"/>
    <property type="evidence" value="ECO:0007669"/>
    <property type="project" value="UniProtKB-SubCell"/>
</dbReference>
<dbReference type="GO" id="GO:0006260">
    <property type="term" value="P:DNA replication"/>
    <property type="evidence" value="ECO:0007669"/>
    <property type="project" value="UniProtKB-UniRule"/>
</dbReference>
<dbReference type="HAMAP" id="MF_01159">
    <property type="entry name" value="YabA"/>
    <property type="match status" value="1"/>
</dbReference>
<dbReference type="InterPro" id="IPR010377">
    <property type="entry name" value="YabA"/>
</dbReference>
<dbReference type="NCBIfam" id="NF009640">
    <property type="entry name" value="PRK13169.1-1"/>
    <property type="match status" value="1"/>
</dbReference>
<dbReference type="Pfam" id="PF06156">
    <property type="entry name" value="YabA"/>
    <property type="match status" value="1"/>
</dbReference>
<dbReference type="PIRSF" id="PIRSF021439">
    <property type="entry name" value="DUF972"/>
    <property type="match status" value="1"/>
</dbReference>
<feature type="chain" id="PRO_1000164309" description="Replication initiation control protein YabA">
    <location>
        <begin position="1"/>
        <end position="105"/>
    </location>
</feature>
<feature type="binding site" evidence="1">
    <location>
        <position position="79"/>
    </location>
    <ligand>
        <name>Zn(2+)</name>
        <dbReference type="ChEBI" id="CHEBI:29105"/>
    </ligand>
</feature>
<feature type="binding site" evidence="1">
    <location>
        <position position="81"/>
    </location>
    <ligand>
        <name>Zn(2+)</name>
        <dbReference type="ChEBI" id="CHEBI:29105"/>
    </ligand>
</feature>
<feature type="binding site" evidence="1">
    <location>
        <position position="95"/>
    </location>
    <ligand>
        <name>Zn(2+)</name>
        <dbReference type="ChEBI" id="CHEBI:29105"/>
    </ligand>
</feature>
<feature type="binding site" evidence="1">
    <location>
        <position position="98"/>
    </location>
    <ligand>
        <name>Zn(2+)</name>
        <dbReference type="ChEBI" id="CHEBI:29105"/>
    </ligand>
</feature>
<organism>
    <name type="scientific">Streptococcus pneumoniae (strain ATCC 700669 / Spain 23F-1)</name>
    <dbReference type="NCBI Taxonomy" id="561276"/>
    <lineage>
        <taxon>Bacteria</taxon>
        <taxon>Bacillati</taxon>
        <taxon>Bacillota</taxon>
        <taxon>Bacilli</taxon>
        <taxon>Lactobacillales</taxon>
        <taxon>Streptococcaceae</taxon>
        <taxon>Streptococcus</taxon>
    </lineage>
</organism>
<accession>B8ZP39</accession>
<name>YABA_STRPJ</name>
<gene>
    <name evidence="1" type="primary">yabA</name>
    <name type="ordered locus">SPN23F08590</name>
</gene>
<proteinExistence type="inferred from homology"/>
<evidence type="ECO:0000255" key="1">
    <source>
        <dbReference type="HAMAP-Rule" id="MF_01159"/>
    </source>
</evidence>
<reference key="1">
    <citation type="journal article" date="2009" name="J. Bacteriol.">
        <title>Role of conjugative elements in the evolution of the multidrug-resistant pandemic clone Streptococcus pneumoniae Spain23F ST81.</title>
        <authorList>
            <person name="Croucher N.J."/>
            <person name="Walker D."/>
            <person name="Romero P."/>
            <person name="Lennard N."/>
            <person name="Paterson G.K."/>
            <person name="Bason N.C."/>
            <person name="Mitchell A.M."/>
            <person name="Quail M.A."/>
            <person name="Andrew P.W."/>
            <person name="Parkhill J."/>
            <person name="Bentley S.D."/>
            <person name="Mitchell T.J."/>
        </authorList>
    </citation>
    <scope>NUCLEOTIDE SEQUENCE [LARGE SCALE GENOMIC DNA]</scope>
    <source>
        <strain>ATCC 700669 / Spain 23F-1</strain>
    </source>
</reference>
<comment type="function">
    <text evidence="1">Involved in control of chromosome replication initiation. Inhibits the cooperative binding of DnaA to the oriC region, thus negatively regulating initiation of chromosome replication. Inhibits the ability of DnaA-ATP to form a helix on DNA; does not disassemble preformed DnaA-DNA helices. Decreases the residence time of DnaA on the chromosome at its binding sites (oriC, replication forks and promoter-binding sites). Tethers DnaA to the replication machinery via the DNA polymerase beta sliding clamp subunit (dnaN). Associates with oriC and other DnaA targets on the chromosome in a DnaA-dependent manner.</text>
</comment>
<comment type="cofactor">
    <cofactor evidence="1">
        <name>Zn(2+)</name>
        <dbReference type="ChEBI" id="CHEBI:29105"/>
    </cofactor>
    <text evidence="1">Binds 1 zinc ion per subunit.</text>
</comment>
<comment type="subunit">
    <text evidence="1">Homotetramer. Interacts with both DnaA and DnaN, acting as a bridge between these two proteins.</text>
</comment>
<comment type="subcellular location">
    <subcellularLocation>
        <location evidence="1">Cytoplasm</location>
        <location evidence="1">Nucleoid</location>
    </subcellularLocation>
    <text evidence="1">Localizes in tight foci, which correspond to the replisome at mid-cell throughout the cell cycle.</text>
</comment>
<comment type="similarity">
    <text evidence="1">Belongs to the YabA family.</text>
</comment>